<comment type="function">
    <text evidence="1 3 4">Electrogenic voltage-dependent transporter that mediates the transport of a variety of endogenous bioactive amines, cationic xenobiotics and drugs (PubMed:16873718, PubMed:23255610). Utilizes the physiologic inside-negative membrane potential as a driving force to facilitate cellular uptake of organic cations (By similarity). Functions as a Na(+)- and Cl(-)-independent bidirectional transporter (By similarity). Substrate transport is pH-dependent and enhanced under acidic condition, which is most likely the result of allosteric changes in the transporter structure (PubMed:16873718). Implicated in monoamine neurotransmitters uptake such as serotonin, dopamine, adrenaline/epinephrine, noradrenaline/norepinephrine, histamine and tyramine, thereby supporting a role in homeostatic regulation of aminergic neurotransmission in the central nervous system (PubMed:23255610). Also responsible for the uptake of bioactive amines and drugs through the blood-cerebrospinal fluid (CSF) barrier, from the CSF into choroid plexus epithelial cells, thereby playing a significant role in the clearance of cationic neurotoxins, xenobiotics and metabolic waste in the brain (PubMed:23255610). Involved in bidirectional transport of the purine nucleoside adenosine and plays a role in the regulation of extracellular adenosine concentrations in cardiac tissues, in particular during ischemia (PubMed:16873718). May be involved in organic cation uptake from the tubular lumen into renal tubular cells, thereby contributing to organic cation reabsorption in the kidney (PubMed:23255610). Also transports adenine and guanidine (PubMed:16873718).</text>
</comment>
<comment type="catalytic activity">
    <reaction evidence="4">
        <text>serotonin(out) = serotonin(in)</text>
        <dbReference type="Rhea" id="RHEA:73867"/>
        <dbReference type="ChEBI" id="CHEBI:350546"/>
    </reaction>
</comment>
<comment type="catalytic activity">
    <reaction evidence="4">
        <text>dopamine(out) = dopamine(in)</text>
        <dbReference type="Rhea" id="RHEA:73863"/>
        <dbReference type="ChEBI" id="CHEBI:59905"/>
    </reaction>
</comment>
<comment type="catalytic activity">
    <reaction evidence="1">
        <text>(R)-noradrenaline(out) = (R)-noradrenaline(in)</text>
        <dbReference type="Rhea" id="RHEA:73871"/>
        <dbReference type="ChEBI" id="CHEBI:72587"/>
    </reaction>
</comment>
<comment type="catalytic activity">
    <reaction evidence="1">
        <text>(R)-adrenaline(out) = (R)-adrenaline(in)</text>
        <dbReference type="Rhea" id="RHEA:73875"/>
        <dbReference type="ChEBI" id="CHEBI:71406"/>
    </reaction>
</comment>
<comment type="catalytic activity">
    <reaction evidence="1">
        <text>histamine(out) = histamine(in)</text>
        <dbReference type="Rhea" id="RHEA:73879"/>
        <dbReference type="ChEBI" id="CHEBI:58432"/>
    </reaction>
</comment>
<comment type="catalytic activity">
    <reaction evidence="1">
        <text>tyramine(in) = tyramine(out)</text>
        <dbReference type="Rhea" id="RHEA:74783"/>
        <dbReference type="ChEBI" id="CHEBI:327995"/>
    </reaction>
</comment>
<comment type="catalytic activity">
    <reaction evidence="1">
        <text>guanidine(out) = guanidine(in)</text>
        <dbReference type="Rhea" id="RHEA:73883"/>
        <dbReference type="ChEBI" id="CHEBI:30087"/>
    </reaction>
</comment>
<comment type="catalytic activity">
    <reaction evidence="3">
        <text>adenine(out) = adenine(in)</text>
        <dbReference type="Rhea" id="RHEA:71523"/>
        <dbReference type="ChEBI" id="CHEBI:16708"/>
    </reaction>
</comment>
<comment type="catalytic activity">
    <reaction evidence="3">
        <text>adenosine(in) = adenosine(out)</text>
        <dbReference type="Rhea" id="RHEA:75343"/>
        <dbReference type="ChEBI" id="CHEBI:16335"/>
    </reaction>
    <physiologicalReaction direction="left-to-right" evidence="1">
        <dbReference type="Rhea" id="RHEA:75344"/>
    </physiologicalReaction>
    <physiologicalReaction direction="right-to-left" evidence="1">
        <dbReference type="Rhea" id="RHEA:75345"/>
    </physiologicalReaction>
</comment>
<comment type="activity regulation">
    <text evidence="3">Activated at acidic pH.</text>
</comment>
<comment type="biophysicochemical properties">
    <kinetics>
        <KM evidence="3">130 uM for adenosine (at pH 5.5)</KM>
        <KM evidence="3">2600 uM for adenine (at pH 5.5)</KM>
    </kinetics>
    <phDependence>
        <text evidence="3">Optimum pH is 5.5 for adenosine and adenine uptake (PubMed:16873718). Absence of adenosine transport at pH 7.4 (PubMed:16873718).</text>
    </phDependence>
</comment>
<comment type="subcellular location">
    <subcellularLocation>
        <location evidence="1">Cell membrane</location>
        <topology evidence="7">Multi-pass membrane protein</topology>
    </subcellularLocation>
    <subcellularLocation>
        <location evidence="4">Apical cell membrane</location>
        <topology evidence="7">Multi-pass membrane protein</topology>
    </subcellularLocation>
    <text evidence="4">Localized to the apical blood-cerebrospinal fluid(CSF)-facing membrane of the choroid plexus epithelium.</text>
</comment>
<comment type="tissue specificity">
    <text evidence="3 4">Expressed in heart (PubMed:16873718). Expressed in choroid plexus (PubMed:23255610).</text>
</comment>
<comment type="domain">
    <text evidence="1">Glu-206 is essential for cation selectivity and may function as the charge sensor for cationic substrates.</text>
</comment>
<comment type="PTM">
    <text evidence="3">N-glycosylated.</text>
</comment>
<comment type="disruption phenotype">
    <text evidence="4">Knockout mice are viable, fertile with no overt physiological abnormalities. Knockout mice show an impaired uptake of serotonin and dopamine in choroid plexus.</text>
</comment>
<comment type="miscellaneous">
    <text evidence="1 4">Other than a moderate activity for adenosine, PMAT does not interact with nucleosides, nucleobases, or nucleotides (By similarity). Mediates the uptake of clinically used drugs including neurotoxin 1-methyl-4-phenylpyridinium (MPP(+)) (PubMed:23255610).</text>
</comment>
<comment type="similarity">
    <text evidence="7">Belongs to the SLC29A/ENT transporter (TC 2.A.57) family.</text>
</comment>
<feature type="chain" id="PRO_0000326252" description="Equilibrative nucleoside transporter 4">
    <location>
        <begin position="1"/>
        <end position="528"/>
    </location>
</feature>
<feature type="topological domain" description="Extracellular" evidence="2">
    <location>
        <begin position="1"/>
        <end position="68"/>
    </location>
</feature>
<feature type="transmembrane region" description="Helical" evidence="2">
    <location>
        <begin position="69"/>
        <end position="89"/>
    </location>
</feature>
<feature type="topological domain" description="Cytoplasmic" evidence="2">
    <location>
        <begin position="90"/>
        <end position="101"/>
    </location>
</feature>
<feature type="transmembrane region" description="Helical" evidence="2">
    <location>
        <begin position="102"/>
        <end position="122"/>
    </location>
</feature>
<feature type="topological domain" description="Extracellular" evidence="2">
    <location>
        <begin position="123"/>
        <end position="139"/>
    </location>
</feature>
<feature type="transmembrane region" description="Helical" evidence="2">
    <location>
        <begin position="140"/>
        <end position="160"/>
    </location>
</feature>
<feature type="topological domain" description="Cytoplasmic" evidence="2">
    <location>
        <begin position="161"/>
        <end position="166"/>
    </location>
</feature>
<feature type="transmembrane region" description="Helical" evidence="2">
    <location>
        <begin position="167"/>
        <end position="187"/>
    </location>
</feature>
<feature type="topological domain" description="Extracellular" evidence="2">
    <location>
        <begin position="188"/>
        <end position="231"/>
    </location>
</feature>
<feature type="transmembrane region" description="Helical" evidence="2">
    <location>
        <begin position="232"/>
        <end position="252"/>
    </location>
</feature>
<feature type="topological domain" description="Cytoplasmic" evidence="2">
    <location>
        <begin position="253"/>
        <end position="346"/>
    </location>
</feature>
<feature type="transmembrane region" description="Helical" evidence="2">
    <location>
        <begin position="347"/>
        <end position="367"/>
    </location>
</feature>
<feature type="topological domain" description="Extracellular" evidence="2">
    <location>
        <begin position="368"/>
        <end position="376"/>
    </location>
</feature>
<feature type="transmembrane region" description="Helical" evidence="2">
    <location>
        <begin position="377"/>
        <end position="397"/>
    </location>
</feature>
<feature type="topological domain" description="Cytoplasmic" evidence="2">
    <location>
        <begin position="398"/>
        <end position="411"/>
    </location>
</feature>
<feature type="transmembrane region" description="Helical" evidence="2">
    <location>
        <begin position="412"/>
        <end position="432"/>
    </location>
</feature>
<feature type="topological domain" description="Extracellular" evidence="2">
    <location>
        <begin position="433"/>
        <end position="445"/>
    </location>
</feature>
<feature type="transmembrane region" description="Helical" evidence="2">
    <location>
        <begin position="446"/>
        <end position="466"/>
    </location>
</feature>
<feature type="topological domain" description="Cytoplasmic" evidence="2">
    <location>
        <begin position="467"/>
        <end position="481"/>
    </location>
</feature>
<feature type="transmembrane region" description="Helical" evidence="2">
    <location>
        <begin position="482"/>
        <end position="504"/>
    </location>
</feature>
<feature type="topological domain" description="Extracellular" evidence="2">
    <location>
        <begin position="505"/>
        <end position="528"/>
    </location>
</feature>
<feature type="site" description="Essential for cation selectivity" evidence="1">
    <location>
        <position position="206"/>
    </location>
</feature>
<feature type="glycosylation site" description="N-linked (GlcNAc...) asparagine" evidence="3">
    <location>
        <position position="521"/>
    </location>
</feature>
<reference key="1">
    <citation type="journal article" date="2004" name="Genome Res.">
        <title>The status, quality, and expansion of the NIH full-length cDNA project: the Mammalian Gene Collection (MGC).</title>
        <authorList>
            <consortium name="The MGC Project Team"/>
        </authorList>
    </citation>
    <scope>NUCLEOTIDE SEQUENCE [LARGE SCALE MRNA]</scope>
    <source>
        <tissue>Mammary tumor</tissue>
    </source>
</reference>
<reference key="2">
    <citation type="journal article" date="2006" name="Circ. Res.">
        <title>Distribution and functional characterization of equilibrative nucleoside transporter-4, a novel cardiac adenosine transporter activated at acidic pH.</title>
        <authorList>
            <person name="Barnes K."/>
            <person name="Dobrzynski H."/>
            <person name="Foppolo S."/>
            <person name="Beal P.R."/>
            <person name="Ismat F."/>
            <person name="Scullion E.R."/>
            <person name="Sun L."/>
            <person name="Tellez J."/>
            <person name="Ritzel M.W."/>
            <person name="Claycomb W.C."/>
            <person name="Cass C.E."/>
            <person name="Young J.D."/>
            <person name="Billeter-Clark R."/>
            <person name="Boyett M.R."/>
            <person name="Baldwin S.A."/>
        </authorList>
    </citation>
    <scope>FUNCTION</scope>
    <scope>TRANSPORTER ACTIVITY</scope>
    <scope>BIOPHYSICOCHEMICAL PROPERTIES</scope>
    <scope>TISSUE SPECIFICITY</scope>
    <scope>GLYCOSYLATION AT ASN-521</scope>
</reference>
<reference key="3">
    <citation type="journal article" date="2013" name="J. Biol. Chem.">
        <title>Impaired monoamine and organic cation uptake in choroid plexus in mice with targeted disruption of the plasma membrane monoamine transporter (Slc29a4) gene.</title>
        <authorList>
            <person name="Duan H."/>
            <person name="Wang J."/>
        </authorList>
    </citation>
    <scope>FUNCTION</scope>
    <scope>TRANSPORTER ACTIVITY</scope>
    <scope>TISSUE SPECIFICITY</scope>
    <scope>SUBCELLULAR LOCATION</scope>
    <scope>DISRUPTION PHENOTYPE</scope>
    <scope>MISCELLANEOUS</scope>
</reference>
<protein>
    <recommendedName>
        <fullName evidence="5">Equilibrative nucleoside transporter 4</fullName>
        <shortName evidence="5">mENT4</shortName>
    </recommendedName>
    <alternativeName>
        <fullName evidence="6">Plasma membrane monoamine transporter</fullName>
        <shortName evidence="6">PMAT</shortName>
    </alternativeName>
    <alternativeName>
        <fullName evidence="6">Solute carrier family 29 member 4</fullName>
    </alternativeName>
</protein>
<keyword id="KW-1003">Cell membrane</keyword>
<keyword id="KW-0325">Glycoprotein</keyword>
<keyword id="KW-0472">Membrane</keyword>
<keyword id="KW-1185">Reference proteome</keyword>
<keyword id="KW-0812">Transmembrane</keyword>
<keyword id="KW-1133">Transmembrane helix</keyword>
<keyword id="KW-0813">Transport</keyword>
<sequence length="528" mass="58099">MGSIGSQRLKEPCVAATSDQSVVTSFSFDNFQLETTAEGAQDPGIRVRGVPTFTDSAVEEPVPDDRYHAIYFAMLLAGVGFLLPYNSFITDVDYLHHKYPGTSIVFDMSLTYILVALAAVLLNNVVVERLNLHTRITTGYLLALGPLLFISICDVWLQLFSHDQAYAINLAAVGTVAFGCTVQQSSFYGYTGLLPKRYTQGVMTGESTAGVMISLSRILTKLLLPDERASTIIFFLVSAGLELLCFLLHLLVRRSRFVLYYTTRPRDSRPVQAGYRVHHDVASGDIHFEHQTPALSSSRSPKESPAHEVTHSNSGVYMRFDVPRPRVKRSWPTFRALLLHRYVVARVIWADMLSIAVTYFITLCLFPGLESEIRHCVLGEWLPILVMAVFNLSDFVGKILAALPVEWRGTHLLACSCLRVVFIPLFILCVYPSGMPALRHPAWPCVFSLLMGISNGYFGSVPMILAAGKVSPKQRELAGNTMTVSYMSGLTLGSAVAYCTYSLTRDAHGSCFQTATAAAANDSIPVGP</sequence>
<accession>Q8R139</accession>
<evidence type="ECO:0000250" key="1">
    <source>
        <dbReference type="UniProtKB" id="Q7RTT9"/>
    </source>
</evidence>
<evidence type="ECO:0000255" key="2"/>
<evidence type="ECO:0000269" key="3">
    <source>
    </source>
</evidence>
<evidence type="ECO:0000269" key="4">
    <source>
    </source>
</evidence>
<evidence type="ECO:0000303" key="5">
    <source>
    </source>
</evidence>
<evidence type="ECO:0000303" key="6">
    <source>
    </source>
</evidence>
<evidence type="ECO:0000305" key="7"/>
<evidence type="ECO:0000312" key="8">
    <source>
        <dbReference type="MGI" id="MGI:2385330"/>
    </source>
</evidence>
<proteinExistence type="evidence at protein level"/>
<dbReference type="EMBL" id="BC025599">
    <property type="protein sequence ID" value="AAH25599.1"/>
    <property type="molecule type" value="mRNA"/>
</dbReference>
<dbReference type="CCDS" id="CCDS39364.1"/>
<dbReference type="RefSeq" id="NP_001411658.1">
    <property type="nucleotide sequence ID" value="NM_001424729.1"/>
</dbReference>
<dbReference type="RefSeq" id="NP_666369.1">
    <property type="nucleotide sequence ID" value="NM_146257.3"/>
</dbReference>
<dbReference type="RefSeq" id="XP_006504769.1">
    <property type="nucleotide sequence ID" value="XM_006504706.2"/>
</dbReference>
<dbReference type="SMR" id="Q8R139"/>
<dbReference type="FunCoup" id="Q8R139">
    <property type="interactions" value="141"/>
</dbReference>
<dbReference type="STRING" id="10090.ENSMUSP00000059896"/>
<dbReference type="GlyCosmos" id="Q8R139">
    <property type="glycosylation" value="1 site, No reported glycans"/>
</dbReference>
<dbReference type="GlyGen" id="Q8R139">
    <property type="glycosylation" value="1 site"/>
</dbReference>
<dbReference type="iPTMnet" id="Q8R139"/>
<dbReference type="PhosphoSitePlus" id="Q8R139"/>
<dbReference type="PaxDb" id="10090-ENSMUSP00000059896"/>
<dbReference type="ProteomicsDB" id="256878"/>
<dbReference type="Antibodypedia" id="24590">
    <property type="antibodies" value="251 antibodies from 26 providers"/>
</dbReference>
<dbReference type="DNASU" id="243328"/>
<dbReference type="Ensembl" id="ENSMUST00000058418.8">
    <property type="protein sequence ID" value="ENSMUSP00000059896.8"/>
    <property type="gene ID" value="ENSMUSG00000050822.12"/>
</dbReference>
<dbReference type="GeneID" id="243328"/>
<dbReference type="KEGG" id="mmu:243328"/>
<dbReference type="UCSC" id="uc009aiz.1">
    <property type="organism name" value="mouse"/>
</dbReference>
<dbReference type="AGR" id="MGI:2385330"/>
<dbReference type="CTD" id="222962"/>
<dbReference type="MGI" id="MGI:2385330">
    <property type="gene designation" value="Slc29a4"/>
</dbReference>
<dbReference type="VEuPathDB" id="HostDB:ENSMUSG00000050822"/>
<dbReference type="eggNOG" id="KOG1479">
    <property type="taxonomic scope" value="Eukaryota"/>
</dbReference>
<dbReference type="GeneTree" id="ENSGT00950000182898"/>
<dbReference type="HOGENOM" id="CLU_021611_4_0_1"/>
<dbReference type="InParanoid" id="Q8R139"/>
<dbReference type="OMA" id="ARGMNEF"/>
<dbReference type="OrthoDB" id="10014563at2759"/>
<dbReference type="PhylomeDB" id="Q8R139"/>
<dbReference type="TreeFam" id="TF313950"/>
<dbReference type="Reactome" id="R-MMU-83936">
    <property type="pathway name" value="Transport of nucleosides and free purine and pyrimidine bases across the plasma membrane"/>
</dbReference>
<dbReference type="BioGRID-ORCS" id="243328">
    <property type="hits" value="4 hits in 80 CRISPR screens"/>
</dbReference>
<dbReference type="ChiTaRS" id="Slc29a4">
    <property type="organism name" value="mouse"/>
</dbReference>
<dbReference type="PRO" id="PR:Q8R139"/>
<dbReference type="Proteomes" id="UP000000589">
    <property type="component" value="Chromosome 5"/>
</dbReference>
<dbReference type="RNAct" id="Q8R139">
    <property type="molecule type" value="protein"/>
</dbReference>
<dbReference type="Bgee" id="ENSMUSG00000050822">
    <property type="expression patterns" value="Expressed in embryonic brain and 103 other cell types or tissues"/>
</dbReference>
<dbReference type="ExpressionAtlas" id="Q8R139">
    <property type="expression patterns" value="baseline and differential"/>
</dbReference>
<dbReference type="GO" id="GO:0016324">
    <property type="term" value="C:apical plasma membrane"/>
    <property type="evidence" value="ECO:0000314"/>
    <property type="project" value="UniProtKB"/>
</dbReference>
<dbReference type="GO" id="GO:0016323">
    <property type="term" value="C:basolateral plasma membrane"/>
    <property type="evidence" value="ECO:0000314"/>
    <property type="project" value="ARUK-UCL"/>
</dbReference>
<dbReference type="GO" id="GO:0098793">
    <property type="term" value="C:presynapse"/>
    <property type="evidence" value="ECO:0007669"/>
    <property type="project" value="GOC"/>
</dbReference>
<dbReference type="GO" id="GO:0015562">
    <property type="term" value="F:efflux transmembrane transporter activity"/>
    <property type="evidence" value="ECO:0000250"/>
    <property type="project" value="UniProtKB"/>
</dbReference>
<dbReference type="GO" id="GO:0008504">
    <property type="term" value="F:monoamine transmembrane transporter activity"/>
    <property type="evidence" value="ECO:0000315"/>
    <property type="project" value="UniProtKB"/>
</dbReference>
<dbReference type="GO" id="GO:0008324">
    <property type="term" value="F:monoatomic cation transmembrane transporter activity"/>
    <property type="evidence" value="ECO:0000315"/>
    <property type="project" value="ARUK-UCL"/>
</dbReference>
<dbReference type="GO" id="GO:0005326">
    <property type="term" value="F:neurotransmitter transmembrane transporter activity"/>
    <property type="evidence" value="ECO:0000315"/>
    <property type="project" value="UniProtKB"/>
</dbReference>
<dbReference type="GO" id="GO:0005337">
    <property type="term" value="F:nucleoside transmembrane transporter activity"/>
    <property type="evidence" value="ECO:0007669"/>
    <property type="project" value="InterPro"/>
</dbReference>
<dbReference type="GO" id="GO:0005342">
    <property type="term" value="F:organic acid transmembrane transporter activity"/>
    <property type="evidence" value="ECO:0007669"/>
    <property type="project" value="Ensembl"/>
</dbReference>
<dbReference type="GO" id="GO:0015101">
    <property type="term" value="F:organic cation transmembrane transporter activity"/>
    <property type="evidence" value="ECO:0007669"/>
    <property type="project" value="Ensembl"/>
</dbReference>
<dbReference type="GO" id="GO:0019534">
    <property type="term" value="F:toxin transmembrane transporter activity"/>
    <property type="evidence" value="ECO:0000315"/>
    <property type="project" value="ARUK-UCL"/>
</dbReference>
<dbReference type="GO" id="GO:0042910">
    <property type="term" value="F:xenobiotic transmembrane transporter activity"/>
    <property type="evidence" value="ECO:0007669"/>
    <property type="project" value="Ensembl"/>
</dbReference>
<dbReference type="GO" id="GO:0032238">
    <property type="term" value="P:adenosine transport"/>
    <property type="evidence" value="ECO:0000314"/>
    <property type="project" value="UniProtKB"/>
</dbReference>
<dbReference type="GO" id="GO:1990748">
    <property type="term" value="P:cellular detoxification"/>
    <property type="evidence" value="ECO:0000315"/>
    <property type="project" value="ARUK-UCL"/>
</dbReference>
<dbReference type="GO" id="GO:0015872">
    <property type="term" value="P:dopamine transport"/>
    <property type="evidence" value="ECO:0000315"/>
    <property type="project" value="UniProtKB"/>
</dbReference>
<dbReference type="GO" id="GO:0090494">
    <property type="term" value="P:dopamine uptake"/>
    <property type="evidence" value="ECO:0000315"/>
    <property type="project" value="ARUK-UCL"/>
</dbReference>
<dbReference type="GO" id="GO:0048241">
    <property type="term" value="P:epinephrine transport"/>
    <property type="evidence" value="ECO:0000250"/>
    <property type="project" value="UniProtKB"/>
</dbReference>
<dbReference type="GO" id="GO:0051625">
    <property type="term" value="P:epinephrine uptake"/>
    <property type="evidence" value="ECO:0007669"/>
    <property type="project" value="Ensembl"/>
</dbReference>
<dbReference type="GO" id="GO:0140115">
    <property type="term" value="P:export across plasma membrane"/>
    <property type="evidence" value="ECO:0007669"/>
    <property type="project" value="Ensembl"/>
</dbReference>
<dbReference type="GO" id="GO:0051608">
    <property type="term" value="P:histamine transport"/>
    <property type="evidence" value="ECO:0000250"/>
    <property type="project" value="UniProtKB"/>
</dbReference>
<dbReference type="GO" id="GO:0051615">
    <property type="term" value="P:histamine uptake"/>
    <property type="evidence" value="ECO:0007669"/>
    <property type="project" value="Ensembl"/>
</dbReference>
<dbReference type="GO" id="GO:0098655">
    <property type="term" value="P:monoatomic cation transmembrane transport"/>
    <property type="evidence" value="ECO:0000315"/>
    <property type="project" value="ARUK-UCL"/>
</dbReference>
<dbReference type="GO" id="GO:0006836">
    <property type="term" value="P:neurotransmitter transport"/>
    <property type="evidence" value="ECO:0000315"/>
    <property type="project" value="ARUK-UCL"/>
</dbReference>
<dbReference type="GO" id="GO:0015874">
    <property type="term" value="P:norepinephrine transport"/>
    <property type="evidence" value="ECO:0000250"/>
    <property type="project" value="UniProtKB"/>
</dbReference>
<dbReference type="GO" id="GO:0051620">
    <property type="term" value="P:norepinephrine uptake"/>
    <property type="evidence" value="ECO:0000315"/>
    <property type="project" value="ARUK-UCL"/>
</dbReference>
<dbReference type="GO" id="GO:0006837">
    <property type="term" value="P:serotonin transport"/>
    <property type="evidence" value="ECO:0000315"/>
    <property type="project" value="UniProtKB"/>
</dbReference>
<dbReference type="GO" id="GO:0051610">
    <property type="term" value="P:serotonin uptake"/>
    <property type="evidence" value="ECO:0000315"/>
    <property type="project" value="ARUK-UCL"/>
</dbReference>
<dbReference type="GO" id="GO:0042908">
    <property type="term" value="P:xenobiotic transport"/>
    <property type="evidence" value="ECO:0000315"/>
    <property type="project" value="ARUK-UCL"/>
</dbReference>
<dbReference type="FunFam" id="1.20.1250.20:FF:000255">
    <property type="entry name" value="Solute carrier family 29 member 4"/>
    <property type="match status" value="1"/>
</dbReference>
<dbReference type="InterPro" id="IPR002259">
    <property type="entry name" value="Eqnu_transpt"/>
</dbReference>
<dbReference type="InterPro" id="IPR036259">
    <property type="entry name" value="MFS_trans_sf"/>
</dbReference>
<dbReference type="PANTHER" id="PTHR10332">
    <property type="entry name" value="EQUILIBRATIVE NUCLEOSIDE TRANSPORTER"/>
    <property type="match status" value="1"/>
</dbReference>
<dbReference type="PANTHER" id="PTHR10332:SF10">
    <property type="entry name" value="EQUILIBRATIVE NUCLEOSIDE TRANSPORTER 4"/>
    <property type="match status" value="1"/>
</dbReference>
<dbReference type="Pfam" id="PF01733">
    <property type="entry name" value="Nucleoside_tran"/>
    <property type="match status" value="1"/>
</dbReference>
<dbReference type="PIRSF" id="PIRSF016379">
    <property type="entry name" value="ENT"/>
    <property type="match status" value="1"/>
</dbReference>
<dbReference type="PRINTS" id="PR01130">
    <property type="entry name" value="DERENTRNSPRT"/>
</dbReference>
<dbReference type="SUPFAM" id="SSF103473">
    <property type="entry name" value="MFS general substrate transporter"/>
    <property type="match status" value="1"/>
</dbReference>
<organism>
    <name type="scientific">Mus musculus</name>
    <name type="common">Mouse</name>
    <dbReference type="NCBI Taxonomy" id="10090"/>
    <lineage>
        <taxon>Eukaryota</taxon>
        <taxon>Metazoa</taxon>
        <taxon>Chordata</taxon>
        <taxon>Craniata</taxon>
        <taxon>Vertebrata</taxon>
        <taxon>Euteleostomi</taxon>
        <taxon>Mammalia</taxon>
        <taxon>Eutheria</taxon>
        <taxon>Euarchontoglires</taxon>
        <taxon>Glires</taxon>
        <taxon>Rodentia</taxon>
        <taxon>Myomorpha</taxon>
        <taxon>Muroidea</taxon>
        <taxon>Muridae</taxon>
        <taxon>Murinae</taxon>
        <taxon>Mus</taxon>
        <taxon>Mus</taxon>
    </lineage>
</organism>
<gene>
    <name evidence="8" type="primary">Slc29a4</name>
    <name type="synonym">Ent4</name>
    <name evidence="6" type="synonym">pmat</name>
</gene>
<name>S29A4_MOUSE</name>